<proteinExistence type="inferred from homology"/>
<feature type="chain" id="PRO_0000412103" description="6-carboxyhexanoate--CoA ligase">
    <location>
        <begin position="1"/>
        <end position="245"/>
    </location>
</feature>
<accession>A6UQM0</accession>
<name>BIOW_METVS</name>
<gene>
    <name evidence="1" type="primary">bioW</name>
    <name type="ordered locus">Mevan_0887</name>
</gene>
<comment type="function">
    <text evidence="1">Catalyzes the transformation of pimelate into pimeloyl-CoA with concomitant hydrolysis of ATP to AMP.</text>
</comment>
<comment type="catalytic activity">
    <reaction evidence="1">
        <text>heptanedioate + ATP + CoA = 6-carboxyhexanoyl-CoA + AMP + diphosphate</text>
        <dbReference type="Rhea" id="RHEA:14781"/>
        <dbReference type="ChEBI" id="CHEBI:30616"/>
        <dbReference type="ChEBI" id="CHEBI:33019"/>
        <dbReference type="ChEBI" id="CHEBI:36165"/>
        <dbReference type="ChEBI" id="CHEBI:57287"/>
        <dbReference type="ChEBI" id="CHEBI:57360"/>
        <dbReference type="ChEBI" id="CHEBI:456215"/>
        <dbReference type="EC" id="6.2.1.14"/>
    </reaction>
</comment>
<comment type="cofactor">
    <cofactor evidence="1">
        <name>Mg(2+)</name>
        <dbReference type="ChEBI" id="CHEBI:18420"/>
    </cofactor>
</comment>
<comment type="pathway">
    <text evidence="1">Metabolic intermediate metabolism; pimeloyl-CoA biosynthesis; pimeloyl-CoA from pimelate: step 1/1.</text>
</comment>
<comment type="subunit">
    <text evidence="1">Homodimer.</text>
</comment>
<comment type="similarity">
    <text evidence="1">Belongs to the BioW family.</text>
</comment>
<protein>
    <recommendedName>
        <fullName evidence="1">6-carboxyhexanoate--CoA ligase</fullName>
        <ecNumber evidence="1">6.2.1.14</ecNumber>
    </recommendedName>
    <alternativeName>
        <fullName evidence="1">Pimeloyl-CoA synthase</fullName>
    </alternativeName>
</protein>
<evidence type="ECO:0000255" key="1">
    <source>
        <dbReference type="HAMAP-Rule" id="MF_00668"/>
    </source>
</evidence>
<keyword id="KW-0067">ATP-binding</keyword>
<keyword id="KW-0093">Biotin biosynthesis</keyword>
<keyword id="KW-0436">Ligase</keyword>
<keyword id="KW-0460">Magnesium</keyword>
<keyword id="KW-0547">Nucleotide-binding</keyword>
<organism>
    <name type="scientific">Methanococcus vannielii (strain ATCC 35089 / DSM 1224 / JCM 13029 / OCM 148 / SB)</name>
    <dbReference type="NCBI Taxonomy" id="406327"/>
    <lineage>
        <taxon>Archaea</taxon>
        <taxon>Methanobacteriati</taxon>
        <taxon>Methanobacteriota</taxon>
        <taxon>Methanomada group</taxon>
        <taxon>Methanococci</taxon>
        <taxon>Methanococcales</taxon>
        <taxon>Methanococcaceae</taxon>
        <taxon>Methanococcus</taxon>
    </lineage>
</organism>
<reference key="1">
    <citation type="submission" date="2007-06" db="EMBL/GenBank/DDBJ databases">
        <title>Complete sequence of Methanococcus vannielii SB.</title>
        <authorList>
            <consortium name="US DOE Joint Genome Institute"/>
            <person name="Copeland A."/>
            <person name="Lucas S."/>
            <person name="Lapidus A."/>
            <person name="Barry K."/>
            <person name="Glavina del Rio T."/>
            <person name="Dalin E."/>
            <person name="Tice H."/>
            <person name="Pitluck S."/>
            <person name="Chain P."/>
            <person name="Malfatti S."/>
            <person name="Shin M."/>
            <person name="Vergez L."/>
            <person name="Schmutz J."/>
            <person name="Larimer F."/>
            <person name="Land M."/>
            <person name="Hauser L."/>
            <person name="Kyrpides N."/>
            <person name="Anderson I."/>
            <person name="Sieprawska-Lupa M."/>
            <person name="Whitman W.B."/>
            <person name="Richardson P."/>
        </authorList>
    </citation>
    <scope>NUCLEOTIDE SEQUENCE [LARGE SCALE GENOMIC DNA]</scope>
    <source>
        <strain>ATCC 35089 / DSM 1224 / JCM 13029 / OCM 148 / SB</strain>
    </source>
</reference>
<dbReference type="EC" id="6.2.1.14" evidence="1"/>
<dbReference type="EMBL" id="CP000742">
    <property type="protein sequence ID" value="ABR54792.1"/>
    <property type="molecule type" value="Genomic_DNA"/>
</dbReference>
<dbReference type="RefSeq" id="WP_011972693.1">
    <property type="nucleotide sequence ID" value="NC_009634.1"/>
</dbReference>
<dbReference type="SMR" id="A6UQM0"/>
<dbReference type="STRING" id="406327.Mevan_0887"/>
<dbReference type="GeneID" id="5326216"/>
<dbReference type="KEGG" id="mvn:Mevan_0887"/>
<dbReference type="eggNOG" id="arCOG05075">
    <property type="taxonomic scope" value="Archaea"/>
</dbReference>
<dbReference type="HOGENOM" id="CLU_076858_0_0_2"/>
<dbReference type="OrthoDB" id="65815at2157"/>
<dbReference type="UniPathway" id="UPA00999">
    <property type="reaction ID" value="UER00351"/>
</dbReference>
<dbReference type="Proteomes" id="UP000001107">
    <property type="component" value="Chromosome"/>
</dbReference>
<dbReference type="GO" id="GO:0042410">
    <property type="term" value="F:6-carboxyhexanoate-CoA ligase activity"/>
    <property type="evidence" value="ECO:0007669"/>
    <property type="project" value="UniProtKB-UniRule"/>
</dbReference>
<dbReference type="GO" id="GO:0005524">
    <property type="term" value="F:ATP binding"/>
    <property type="evidence" value="ECO:0007669"/>
    <property type="project" value="UniProtKB-KW"/>
</dbReference>
<dbReference type="GO" id="GO:0000287">
    <property type="term" value="F:magnesium ion binding"/>
    <property type="evidence" value="ECO:0007669"/>
    <property type="project" value="UniProtKB-UniRule"/>
</dbReference>
<dbReference type="GO" id="GO:0009102">
    <property type="term" value="P:biotin biosynthetic process"/>
    <property type="evidence" value="ECO:0007669"/>
    <property type="project" value="UniProtKB-UniRule"/>
</dbReference>
<dbReference type="HAMAP" id="MF_00668">
    <property type="entry name" value="BioW"/>
    <property type="match status" value="1"/>
</dbReference>
<dbReference type="InterPro" id="IPR005499">
    <property type="entry name" value="BioW"/>
</dbReference>
<dbReference type="NCBIfam" id="NF002360">
    <property type="entry name" value="PRK01322.1"/>
    <property type="match status" value="1"/>
</dbReference>
<dbReference type="Pfam" id="PF03744">
    <property type="entry name" value="BioW"/>
    <property type="match status" value="1"/>
</dbReference>
<sequence length="245" mass="27662">MFSLKMRASKDGVHVSGAERISTENKIEEIANSLIKRALFHENGTPDTINLKLEKITSEITYLKHIPIKTLISNNKETSRNISRNILRKELEVYFLKNGKDFGKIDILIDTAFEIIDKGNMRGAAVLDLDGNRLEEDTEKGVRVKNIDTSEELKSKILADSKLTDRTIDAIAIATKVLNFGFIAEICTSDNYSYNIGYVATKSGYFRIPNLKNEGEFGGRVFFIENSANIEEIFEKIEKTPVIVY</sequence>